<organism>
    <name type="scientific">Mycoplasma capricolum subsp. capricolum (strain California kid / ATCC 27343 / NCTC 10154)</name>
    <dbReference type="NCBI Taxonomy" id="340047"/>
    <lineage>
        <taxon>Bacteria</taxon>
        <taxon>Bacillati</taxon>
        <taxon>Mycoplasmatota</taxon>
        <taxon>Mollicutes</taxon>
        <taxon>Mycoplasmataceae</taxon>
        <taxon>Mycoplasma</taxon>
    </lineage>
</organism>
<name>ATPF_MYCCT</name>
<evidence type="ECO:0000255" key="1">
    <source>
        <dbReference type="HAMAP-Rule" id="MF_01398"/>
    </source>
</evidence>
<proteinExistence type="inferred from homology"/>
<comment type="function">
    <text evidence="1">F(1)F(0) ATP synthase produces ATP from ADP in the presence of a proton or sodium gradient. F-type ATPases consist of two structural domains, F(1) containing the extramembraneous catalytic core and F(0) containing the membrane proton channel, linked together by a central stalk and a peripheral stalk. During catalysis, ATP synthesis in the catalytic domain of F(1) is coupled via a rotary mechanism of the central stalk subunits to proton translocation.</text>
</comment>
<comment type="function">
    <text evidence="1">Component of the F(0) channel, it forms part of the peripheral stalk, linking F(1) to F(0).</text>
</comment>
<comment type="subunit">
    <text evidence="1">F-type ATPases have 2 components, F(1) - the catalytic core - and F(0) - the membrane proton channel. F(1) has five subunits: alpha(3), beta(3), gamma(1), delta(1), epsilon(1). F(0) has three main subunits: a(1), b(2) and c(10-14). The alpha and beta chains form an alternating ring which encloses part of the gamma chain. F(1) is attached to F(0) by a central stalk formed by the gamma and epsilon chains, while a peripheral stalk is formed by the delta and b chains.</text>
</comment>
<comment type="subcellular location">
    <subcellularLocation>
        <location evidence="1">Cell membrane</location>
        <topology evidence="1">Single-pass membrane protein</topology>
    </subcellularLocation>
</comment>
<comment type="similarity">
    <text evidence="1">Belongs to the ATPase B chain family.</text>
</comment>
<accession>Q2ST38</accession>
<dbReference type="EMBL" id="CP000123">
    <property type="protein sequence ID" value="ABC01622.1"/>
    <property type="molecule type" value="Genomic_DNA"/>
</dbReference>
<dbReference type="RefSeq" id="WP_011386980.1">
    <property type="nucleotide sequence ID" value="NC_007633.1"/>
</dbReference>
<dbReference type="SMR" id="Q2ST38"/>
<dbReference type="GeneID" id="23778965"/>
<dbReference type="KEGG" id="mcp:MCAP_0080"/>
<dbReference type="HOGENOM" id="CLU_079215_4_3_14"/>
<dbReference type="PhylomeDB" id="Q2ST38"/>
<dbReference type="Proteomes" id="UP000001928">
    <property type="component" value="Chromosome"/>
</dbReference>
<dbReference type="GO" id="GO:0005886">
    <property type="term" value="C:plasma membrane"/>
    <property type="evidence" value="ECO:0007669"/>
    <property type="project" value="UniProtKB-SubCell"/>
</dbReference>
<dbReference type="GO" id="GO:0045259">
    <property type="term" value="C:proton-transporting ATP synthase complex"/>
    <property type="evidence" value="ECO:0007669"/>
    <property type="project" value="UniProtKB-KW"/>
</dbReference>
<dbReference type="GO" id="GO:0046933">
    <property type="term" value="F:proton-transporting ATP synthase activity, rotational mechanism"/>
    <property type="evidence" value="ECO:0007669"/>
    <property type="project" value="UniProtKB-UniRule"/>
</dbReference>
<dbReference type="GO" id="GO:0046961">
    <property type="term" value="F:proton-transporting ATPase activity, rotational mechanism"/>
    <property type="evidence" value="ECO:0007669"/>
    <property type="project" value="TreeGrafter"/>
</dbReference>
<dbReference type="CDD" id="cd06503">
    <property type="entry name" value="ATP-synt_Fo_b"/>
    <property type="match status" value="1"/>
</dbReference>
<dbReference type="HAMAP" id="MF_01398">
    <property type="entry name" value="ATP_synth_b_bprime"/>
    <property type="match status" value="1"/>
</dbReference>
<dbReference type="InterPro" id="IPR028987">
    <property type="entry name" value="ATP_synth_B-like_membr_sf"/>
</dbReference>
<dbReference type="InterPro" id="IPR002146">
    <property type="entry name" value="ATP_synth_b/b'su_bac/chlpt"/>
</dbReference>
<dbReference type="InterPro" id="IPR005864">
    <property type="entry name" value="ATP_synth_F0_bsu_bac"/>
</dbReference>
<dbReference type="InterPro" id="IPR050059">
    <property type="entry name" value="ATP_synthase_B_chain"/>
</dbReference>
<dbReference type="NCBIfam" id="TIGR01144">
    <property type="entry name" value="ATP_synt_b"/>
    <property type="match status" value="1"/>
</dbReference>
<dbReference type="PANTHER" id="PTHR33445:SF1">
    <property type="entry name" value="ATP SYNTHASE SUBUNIT B"/>
    <property type="match status" value="1"/>
</dbReference>
<dbReference type="PANTHER" id="PTHR33445">
    <property type="entry name" value="ATP SYNTHASE SUBUNIT B', CHLOROPLASTIC"/>
    <property type="match status" value="1"/>
</dbReference>
<dbReference type="Pfam" id="PF00430">
    <property type="entry name" value="ATP-synt_B"/>
    <property type="match status" value="1"/>
</dbReference>
<dbReference type="SUPFAM" id="SSF81573">
    <property type="entry name" value="F1F0 ATP synthase subunit B, membrane domain"/>
    <property type="match status" value="1"/>
</dbReference>
<keyword id="KW-0066">ATP synthesis</keyword>
<keyword id="KW-1003">Cell membrane</keyword>
<keyword id="KW-0138">CF(0)</keyword>
<keyword id="KW-0375">Hydrogen ion transport</keyword>
<keyword id="KW-0406">Ion transport</keyword>
<keyword id="KW-0472">Membrane</keyword>
<keyword id="KW-0812">Transmembrane</keyword>
<keyword id="KW-1133">Transmembrane helix</keyword>
<keyword id="KW-0813">Transport</keyword>
<sequence length="181" mass="20322">MLSVGFNIAINATTQGVPKIIESLFPNLPNFIAHLLATIVLVIVLAKLVYKPYKQMIEKQRQKITEVLSDAIEKQTQANIKIKQANSLLEEAKTESVSIINTARVDAEIQKNKIIDNANLQAKNIQSYAQNSIKQEKIKAQLEIKNTIVNLAINSAEKILSKEIDKNTNKKLIEEFIKDLD</sequence>
<feature type="chain" id="PRO_0000368608" description="ATP synthase subunit b">
    <location>
        <begin position="1"/>
        <end position="181"/>
    </location>
</feature>
<feature type="transmembrane region" description="Helical" evidence="1">
    <location>
        <begin position="24"/>
        <end position="44"/>
    </location>
</feature>
<protein>
    <recommendedName>
        <fullName evidence="1">ATP synthase subunit b</fullName>
    </recommendedName>
    <alternativeName>
        <fullName evidence="1">ATP synthase F(0) sector subunit b</fullName>
    </alternativeName>
    <alternativeName>
        <fullName evidence="1">ATPase subunit I</fullName>
    </alternativeName>
    <alternativeName>
        <fullName evidence="1">F-type ATPase subunit b</fullName>
        <shortName evidence="1">F-ATPase subunit b</shortName>
    </alternativeName>
</protein>
<gene>
    <name evidence="1" type="primary">atpF</name>
    <name type="ordered locus">MCAP_0080</name>
</gene>
<reference key="1">
    <citation type="submission" date="2005-09" db="EMBL/GenBank/DDBJ databases">
        <authorList>
            <person name="Glass J.I."/>
            <person name="Lartigue C."/>
            <person name="Pfannkoch C."/>
            <person name="Baden-Tillson H."/>
            <person name="Smith H.O."/>
            <person name="Venter J.C."/>
            <person name="Roske K."/>
            <person name="Wise K.S."/>
            <person name="Calcutt M.J."/>
            <person name="Nelson W.C."/>
            <person name="Nierman W.C."/>
        </authorList>
    </citation>
    <scope>NUCLEOTIDE SEQUENCE [LARGE SCALE GENOMIC DNA]</scope>
    <source>
        <strain>California kid / ATCC 27343 / NCTC 10154</strain>
    </source>
</reference>